<dbReference type="EMBL" id="AY446894">
    <property type="protein sequence ID" value="AAR31615.1"/>
    <property type="molecule type" value="Genomic_DNA"/>
</dbReference>
<dbReference type="RefSeq" id="YP_081510.1">
    <property type="nucleotide sequence ID" value="NC_006273.2"/>
</dbReference>
<dbReference type="SMR" id="F5HGI9"/>
<dbReference type="DrugBank" id="DB12070">
    <property type="generic name" value="Letermovir"/>
</dbReference>
<dbReference type="DrugCentral" id="F5HGI9"/>
<dbReference type="DNASU" id="3077482"/>
<dbReference type="GeneID" id="3077482"/>
<dbReference type="KEGG" id="vg:3077482"/>
<dbReference type="Reactome" id="R-HSA-9610379">
    <property type="pathway name" value="HCMV Late Events"/>
</dbReference>
<dbReference type="Proteomes" id="UP000000938">
    <property type="component" value="Segment"/>
</dbReference>
<dbReference type="GO" id="GO:0042025">
    <property type="term" value="C:host cell nucleus"/>
    <property type="evidence" value="ECO:0007669"/>
    <property type="project" value="UniProtKB-SubCell"/>
</dbReference>
<dbReference type="GO" id="GO:0019073">
    <property type="term" value="P:viral DNA genome packaging"/>
    <property type="evidence" value="ECO:0007669"/>
    <property type="project" value="InterPro"/>
</dbReference>
<dbReference type="HAMAP" id="MF_04015">
    <property type="entry name" value="HSV_TRM2"/>
    <property type="match status" value="1"/>
</dbReference>
<dbReference type="InterPro" id="IPR005208">
    <property type="entry name" value="Herpes_TT2"/>
</dbReference>
<dbReference type="Pfam" id="PF03581">
    <property type="entry name" value="Herpes_UL33"/>
    <property type="match status" value="1"/>
</dbReference>
<proteinExistence type="inferred from homology"/>
<organismHost>
    <name type="scientific">Homo sapiens</name>
    <name type="common">Human</name>
    <dbReference type="NCBI Taxonomy" id="9606"/>
</organismHost>
<feature type="chain" id="PRO_0000418249" description="Tripartite terminase subunit 2">
    <location>
        <begin position="1"/>
        <end position="157"/>
    </location>
</feature>
<feature type="region of interest" description="Disordered" evidence="2">
    <location>
        <begin position="1"/>
        <end position="69"/>
    </location>
</feature>
<feature type="compositionally biased region" description="Acidic residues" evidence="2">
    <location>
        <begin position="11"/>
        <end position="27"/>
    </location>
</feature>
<protein>
    <recommendedName>
        <fullName evidence="1">Tripartite terminase subunit 2</fullName>
    </recommendedName>
</protein>
<organism>
    <name type="scientific">Human cytomegalovirus (strain Merlin)</name>
    <name type="common">HHV-5</name>
    <name type="synonym">Human herpesvirus 5</name>
    <dbReference type="NCBI Taxonomy" id="295027"/>
    <lineage>
        <taxon>Viruses</taxon>
        <taxon>Duplodnaviria</taxon>
        <taxon>Heunggongvirae</taxon>
        <taxon>Peploviricota</taxon>
        <taxon>Herviviricetes</taxon>
        <taxon>Herpesvirales</taxon>
        <taxon>Orthoherpesviridae</taxon>
        <taxon>Betaherpesvirinae</taxon>
        <taxon>Cytomegalovirus</taxon>
        <taxon>Cytomegalovirus humanbeta5</taxon>
        <taxon>Human cytomegalovirus</taxon>
    </lineage>
</organism>
<evidence type="ECO:0000255" key="1">
    <source>
        <dbReference type="HAMAP-Rule" id="MF_04015"/>
    </source>
</evidence>
<evidence type="ECO:0000256" key="2">
    <source>
        <dbReference type="SAM" id="MobiDB-lite"/>
    </source>
</evidence>
<keyword id="KW-1048">Host nucleus</keyword>
<keyword id="KW-1185">Reference proteome</keyword>
<keyword id="KW-0231">Viral genome packaging</keyword>
<keyword id="KW-1188">Viral release from host cell</keyword>
<gene>
    <name evidence="1" type="primary">TRM2</name>
    <name type="ordered locus">UL51</name>
</gene>
<reference key="1">
    <citation type="journal article" date="2004" name="J. Gen. Virol.">
        <title>Genetic content of wild-type human cytomegalovirus.</title>
        <authorList>
            <person name="Dolan A."/>
            <person name="Cunningham C."/>
            <person name="Hector R.D."/>
            <person name="Hassan-Walker A.F."/>
            <person name="Lee L."/>
            <person name="Addison C."/>
            <person name="Dargan D.J."/>
            <person name="McGeoch D.J."/>
            <person name="Gatherer D."/>
            <person name="Emery V.C."/>
            <person name="Griffiths P.D."/>
            <person name="Sinzger C."/>
            <person name="McSharry B.P."/>
            <person name="Wilkinson G.W.G."/>
            <person name="Davison A.J."/>
        </authorList>
    </citation>
    <scope>NUCLEOTIDE SEQUENCE [LARGE SCALE GENOMIC DNA]</scope>
</reference>
<name>TRM2_HCMVM</name>
<accession>F5HGI9</accession>
<sequence>MSWAKQRVPFLDDDDGEEENDVQDDVDSPVPTRPLVIDEDAEPAAGTSGGLEGGGGDDEDGEDGHALPDLDDDLLLQFEPMLPRVYDLLLPSLDARLNFVNAGQKYAAFLKYVHGDCATCSHGEILREKTQLLTAIVSKLMDINGILEGKDEPAPGK</sequence>
<comment type="function">
    <text evidence="1">Component of the molecular motor that translocates viral genomic DNA in empty capsid during DNA packaging. Forms a tripartite terminase complex together with TRM1 and TRM3 in the host cytoplasm. Once the complex reaches the host nucleus, it interacts with the capsid portal vertex. This portal forms a ring in which genomic DNA is translocated into the capsid.</text>
</comment>
<comment type="subunit">
    <text evidence="1">Associates with TRM1 and TRM3 to form the tripartite terminase complex.</text>
</comment>
<comment type="subcellular location">
    <subcellularLocation>
        <location evidence="1">Host nucleus</location>
    </subcellularLocation>
    <text evidence="1">Found associated with the external surface of the viral capsid during assembly and DNA packaging, but seems absent in extracellular mature virions.</text>
</comment>
<comment type="similarity">
    <text evidence="1">Belongs to the herpesviridae TRM2 protein family.</text>
</comment>